<comment type="function">
    <text evidence="1">Participates actively in the response to hyperosmotic and heat shock by preventing the aggregation of stress-denatured proteins and by disaggregating proteins, also in an autonomous, DnaK-independent fashion. Unfolded proteins bind initially to DnaJ; upon interaction with the DnaJ-bound protein, DnaK hydrolyzes its bound ATP, resulting in the formation of a stable complex. GrpE releases ADP from DnaK; ATP binding to DnaK triggers the release of the substrate protein, thus completing the reaction cycle. Several rounds of ATP-dependent interactions between DnaJ, DnaK and GrpE are required for fully efficient folding. Also involved, together with DnaK and GrpE, in the DNA replication of plasmids through activation of initiation proteins.</text>
</comment>
<comment type="cofactor">
    <cofactor evidence="1">
        <name>Zn(2+)</name>
        <dbReference type="ChEBI" id="CHEBI:29105"/>
    </cofactor>
    <text evidence="1">Binds 2 Zn(2+) ions per monomer.</text>
</comment>
<comment type="subunit">
    <text evidence="1">Homodimer.</text>
</comment>
<comment type="subcellular location">
    <subcellularLocation>
        <location evidence="1">Cytoplasm</location>
    </subcellularLocation>
</comment>
<comment type="domain">
    <text evidence="1">The J domain is necessary and sufficient to stimulate DnaK ATPase activity. Zinc center 1 plays an important role in the autonomous, DnaK-independent chaperone activity of DnaJ. Zinc center 2 is essential for interaction with DnaK and for DnaJ activity.</text>
</comment>
<comment type="similarity">
    <text evidence="1">Belongs to the DnaJ family.</text>
</comment>
<accession>A1RGN2</accession>
<evidence type="ECO:0000255" key="1">
    <source>
        <dbReference type="HAMAP-Rule" id="MF_01152"/>
    </source>
</evidence>
<feature type="chain" id="PRO_1000085300" description="Chaperone protein DnaJ">
    <location>
        <begin position="1"/>
        <end position="376"/>
    </location>
</feature>
<feature type="domain" description="J" evidence="1">
    <location>
        <begin position="5"/>
        <end position="70"/>
    </location>
</feature>
<feature type="repeat" description="CXXCXGXG motif">
    <location>
        <begin position="145"/>
        <end position="152"/>
    </location>
</feature>
<feature type="repeat" description="CXXCXGXG motif">
    <location>
        <begin position="162"/>
        <end position="169"/>
    </location>
</feature>
<feature type="repeat" description="CXXCXGXG motif">
    <location>
        <begin position="184"/>
        <end position="191"/>
    </location>
</feature>
<feature type="repeat" description="CXXCXGXG motif">
    <location>
        <begin position="198"/>
        <end position="205"/>
    </location>
</feature>
<feature type="zinc finger region" description="CR-type" evidence="1">
    <location>
        <begin position="132"/>
        <end position="210"/>
    </location>
</feature>
<feature type="binding site" evidence="1">
    <location>
        <position position="145"/>
    </location>
    <ligand>
        <name>Zn(2+)</name>
        <dbReference type="ChEBI" id="CHEBI:29105"/>
        <label>1</label>
    </ligand>
</feature>
<feature type="binding site" evidence="1">
    <location>
        <position position="148"/>
    </location>
    <ligand>
        <name>Zn(2+)</name>
        <dbReference type="ChEBI" id="CHEBI:29105"/>
        <label>1</label>
    </ligand>
</feature>
<feature type="binding site" evidence="1">
    <location>
        <position position="162"/>
    </location>
    <ligand>
        <name>Zn(2+)</name>
        <dbReference type="ChEBI" id="CHEBI:29105"/>
        <label>2</label>
    </ligand>
</feature>
<feature type="binding site" evidence="1">
    <location>
        <position position="165"/>
    </location>
    <ligand>
        <name>Zn(2+)</name>
        <dbReference type="ChEBI" id="CHEBI:29105"/>
        <label>2</label>
    </ligand>
</feature>
<feature type="binding site" evidence="1">
    <location>
        <position position="184"/>
    </location>
    <ligand>
        <name>Zn(2+)</name>
        <dbReference type="ChEBI" id="CHEBI:29105"/>
        <label>2</label>
    </ligand>
</feature>
<feature type="binding site" evidence="1">
    <location>
        <position position="187"/>
    </location>
    <ligand>
        <name>Zn(2+)</name>
        <dbReference type="ChEBI" id="CHEBI:29105"/>
        <label>2</label>
    </ligand>
</feature>
<feature type="binding site" evidence="1">
    <location>
        <position position="198"/>
    </location>
    <ligand>
        <name>Zn(2+)</name>
        <dbReference type="ChEBI" id="CHEBI:29105"/>
        <label>1</label>
    </ligand>
</feature>
<feature type="binding site" evidence="1">
    <location>
        <position position="201"/>
    </location>
    <ligand>
        <name>Zn(2+)</name>
        <dbReference type="ChEBI" id="CHEBI:29105"/>
        <label>1</label>
    </ligand>
</feature>
<name>DNAJ_SHESW</name>
<gene>
    <name evidence="1" type="primary">dnaJ</name>
    <name type="ordered locus">Sputw3181_0977</name>
</gene>
<keyword id="KW-0143">Chaperone</keyword>
<keyword id="KW-0963">Cytoplasm</keyword>
<keyword id="KW-0235">DNA replication</keyword>
<keyword id="KW-0479">Metal-binding</keyword>
<keyword id="KW-0677">Repeat</keyword>
<keyword id="KW-0346">Stress response</keyword>
<keyword id="KW-0862">Zinc</keyword>
<keyword id="KW-0863">Zinc-finger</keyword>
<protein>
    <recommendedName>
        <fullName evidence="1">Chaperone protein DnaJ</fullName>
    </recommendedName>
</protein>
<proteinExistence type="inferred from homology"/>
<reference key="1">
    <citation type="submission" date="2006-12" db="EMBL/GenBank/DDBJ databases">
        <title>Complete sequence of Shewanella sp. W3-18-1.</title>
        <authorList>
            <consortium name="US DOE Joint Genome Institute"/>
            <person name="Copeland A."/>
            <person name="Lucas S."/>
            <person name="Lapidus A."/>
            <person name="Barry K."/>
            <person name="Detter J.C."/>
            <person name="Glavina del Rio T."/>
            <person name="Hammon N."/>
            <person name="Israni S."/>
            <person name="Dalin E."/>
            <person name="Tice H."/>
            <person name="Pitluck S."/>
            <person name="Chain P."/>
            <person name="Malfatti S."/>
            <person name="Shin M."/>
            <person name="Vergez L."/>
            <person name="Schmutz J."/>
            <person name="Larimer F."/>
            <person name="Land M."/>
            <person name="Hauser L."/>
            <person name="Kyrpides N."/>
            <person name="Lykidis A."/>
            <person name="Tiedje J."/>
            <person name="Richardson P."/>
        </authorList>
    </citation>
    <scope>NUCLEOTIDE SEQUENCE [LARGE SCALE GENOMIC DNA]</scope>
    <source>
        <strain>W3-18-1</strain>
    </source>
</reference>
<organism>
    <name type="scientific">Shewanella sp. (strain W3-18-1)</name>
    <dbReference type="NCBI Taxonomy" id="351745"/>
    <lineage>
        <taxon>Bacteria</taxon>
        <taxon>Pseudomonadati</taxon>
        <taxon>Pseudomonadota</taxon>
        <taxon>Gammaproteobacteria</taxon>
        <taxon>Alteromonadales</taxon>
        <taxon>Shewanellaceae</taxon>
        <taxon>Shewanella</taxon>
    </lineage>
</organism>
<dbReference type="EMBL" id="CP000503">
    <property type="protein sequence ID" value="ABM23827.1"/>
    <property type="molecule type" value="Genomic_DNA"/>
</dbReference>
<dbReference type="RefSeq" id="WP_011788353.1">
    <property type="nucleotide sequence ID" value="NC_008750.1"/>
</dbReference>
<dbReference type="SMR" id="A1RGN2"/>
<dbReference type="KEGG" id="shw:Sputw3181_0977"/>
<dbReference type="HOGENOM" id="CLU_017633_0_7_6"/>
<dbReference type="Proteomes" id="UP000002597">
    <property type="component" value="Chromosome"/>
</dbReference>
<dbReference type="GO" id="GO:0005737">
    <property type="term" value="C:cytoplasm"/>
    <property type="evidence" value="ECO:0007669"/>
    <property type="project" value="UniProtKB-SubCell"/>
</dbReference>
<dbReference type="GO" id="GO:0005524">
    <property type="term" value="F:ATP binding"/>
    <property type="evidence" value="ECO:0007669"/>
    <property type="project" value="InterPro"/>
</dbReference>
<dbReference type="GO" id="GO:0031072">
    <property type="term" value="F:heat shock protein binding"/>
    <property type="evidence" value="ECO:0007669"/>
    <property type="project" value="InterPro"/>
</dbReference>
<dbReference type="GO" id="GO:0051082">
    <property type="term" value="F:unfolded protein binding"/>
    <property type="evidence" value="ECO:0007669"/>
    <property type="project" value="UniProtKB-UniRule"/>
</dbReference>
<dbReference type="GO" id="GO:0008270">
    <property type="term" value="F:zinc ion binding"/>
    <property type="evidence" value="ECO:0007669"/>
    <property type="project" value="UniProtKB-UniRule"/>
</dbReference>
<dbReference type="GO" id="GO:0051085">
    <property type="term" value="P:chaperone cofactor-dependent protein refolding"/>
    <property type="evidence" value="ECO:0007669"/>
    <property type="project" value="TreeGrafter"/>
</dbReference>
<dbReference type="GO" id="GO:0006260">
    <property type="term" value="P:DNA replication"/>
    <property type="evidence" value="ECO:0007669"/>
    <property type="project" value="UniProtKB-KW"/>
</dbReference>
<dbReference type="GO" id="GO:0042026">
    <property type="term" value="P:protein refolding"/>
    <property type="evidence" value="ECO:0007669"/>
    <property type="project" value="TreeGrafter"/>
</dbReference>
<dbReference type="GO" id="GO:0009408">
    <property type="term" value="P:response to heat"/>
    <property type="evidence" value="ECO:0007669"/>
    <property type="project" value="InterPro"/>
</dbReference>
<dbReference type="CDD" id="cd06257">
    <property type="entry name" value="DnaJ"/>
    <property type="match status" value="1"/>
</dbReference>
<dbReference type="CDD" id="cd10747">
    <property type="entry name" value="DnaJ_C"/>
    <property type="match status" value="1"/>
</dbReference>
<dbReference type="CDD" id="cd10719">
    <property type="entry name" value="DnaJ_zf"/>
    <property type="match status" value="1"/>
</dbReference>
<dbReference type="FunFam" id="1.10.287.110:FF:000034">
    <property type="entry name" value="Chaperone protein DnaJ"/>
    <property type="match status" value="1"/>
</dbReference>
<dbReference type="FunFam" id="2.10.230.10:FF:000002">
    <property type="entry name" value="Molecular chaperone DnaJ"/>
    <property type="match status" value="1"/>
</dbReference>
<dbReference type="FunFam" id="2.60.260.20:FF:000004">
    <property type="entry name" value="Molecular chaperone DnaJ"/>
    <property type="match status" value="1"/>
</dbReference>
<dbReference type="Gene3D" id="1.10.287.110">
    <property type="entry name" value="DnaJ domain"/>
    <property type="match status" value="1"/>
</dbReference>
<dbReference type="Gene3D" id="2.10.230.10">
    <property type="entry name" value="Heat shock protein DnaJ, cysteine-rich domain"/>
    <property type="match status" value="1"/>
</dbReference>
<dbReference type="Gene3D" id="2.60.260.20">
    <property type="entry name" value="Urease metallochaperone UreE, N-terminal domain"/>
    <property type="match status" value="2"/>
</dbReference>
<dbReference type="HAMAP" id="MF_01152">
    <property type="entry name" value="DnaJ"/>
    <property type="match status" value="1"/>
</dbReference>
<dbReference type="InterPro" id="IPR012724">
    <property type="entry name" value="DnaJ"/>
</dbReference>
<dbReference type="InterPro" id="IPR002939">
    <property type="entry name" value="DnaJ_C"/>
</dbReference>
<dbReference type="InterPro" id="IPR001623">
    <property type="entry name" value="DnaJ_domain"/>
</dbReference>
<dbReference type="InterPro" id="IPR018253">
    <property type="entry name" value="DnaJ_domain_CS"/>
</dbReference>
<dbReference type="InterPro" id="IPR008971">
    <property type="entry name" value="HSP40/DnaJ_pept-bd"/>
</dbReference>
<dbReference type="InterPro" id="IPR001305">
    <property type="entry name" value="HSP_DnaJ_Cys-rich_dom"/>
</dbReference>
<dbReference type="InterPro" id="IPR036410">
    <property type="entry name" value="HSP_DnaJ_Cys-rich_dom_sf"/>
</dbReference>
<dbReference type="InterPro" id="IPR036869">
    <property type="entry name" value="J_dom_sf"/>
</dbReference>
<dbReference type="NCBIfam" id="TIGR02349">
    <property type="entry name" value="DnaJ_bact"/>
    <property type="match status" value="1"/>
</dbReference>
<dbReference type="NCBIfam" id="NF008035">
    <property type="entry name" value="PRK10767.1"/>
    <property type="match status" value="1"/>
</dbReference>
<dbReference type="PANTHER" id="PTHR43096:SF48">
    <property type="entry name" value="CHAPERONE PROTEIN DNAJ"/>
    <property type="match status" value="1"/>
</dbReference>
<dbReference type="PANTHER" id="PTHR43096">
    <property type="entry name" value="DNAJ HOMOLOG 1, MITOCHONDRIAL-RELATED"/>
    <property type="match status" value="1"/>
</dbReference>
<dbReference type="Pfam" id="PF00226">
    <property type="entry name" value="DnaJ"/>
    <property type="match status" value="1"/>
</dbReference>
<dbReference type="Pfam" id="PF01556">
    <property type="entry name" value="DnaJ_C"/>
    <property type="match status" value="1"/>
</dbReference>
<dbReference type="Pfam" id="PF00684">
    <property type="entry name" value="DnaJ_CXXCXGXG"/>
    <property type="match status" value="1"/>
</dbReference>
<dbReference type="PRINTS" id="PR00625">
    <property type="entry name" value="JDOMAIN"/>
</dbReference>
<dbReference type="SMART" id="SM00271">
    <property type="entry name" value="DnaJ"/>
    <property type="match status" value="1"/>
</dbReference>
<dbReference type="SUPFAM" id="SSF46565">
    <property type="entry name" value="Chaperone J-domain"/>
    <property type="match status" value="1"/>
</dbReference>
<dbReference type="SUPFAM" id="SSF57938">
    <property type="entry name" value="DnaJ/Hsp40 cysteine-rich domain"/>
    <property type="match status" value="1"/>
</dbReference>
<dbReference type="SUPFAM" id="SSF49493">
    <property type="entry name" value="HSP40/DnaJ peptide-binding domain"/>
    <property type="match status" value="2"/>
</dbReference>
<dbReference type="PROSITE" id="PS00636">
    <property type="entry name" value="DNAJ_1"/>
    <property type="match status" value="1"/>
</dbReference>
<dbReference type="PROSITE" id="PS50076">
    <property type="entry name" value="DNAJ_2"/>
    <property type="match status" value="1"/>
</dbReference>
<dbReference type="PROSITE" id="PS51188">
    <property type="entry name" value="ZF_CR"/>
    <property type="match status" value="1"/>
</dbReference>
<sequence length="376" mass="40737">MSKRDYYEVLGVGRDASEREIKKAYKRLAMKFHPDRNPGDKAAEASFKEAKEAYEILTDTDKKAAYDQFGHAGVDPNRGGGYGGGQGDFGDIFGDVFGDIFGGGRRGGQRQAARGSDLRYNLELSLEEAVKGLTKELRIPTLATCDLCDGSGAKKGTSASTCTTCHGQGQVQMRQGFFTVQQPCPTCHGRGKIIKDPCSKCHGDGRVEKSKTLSVKIPAGVDTGDRIRLAGEGEAGEFGAPPGDLYVQVSVREHAIFVRDGNNLYCEVPISFSKAALGGEIEVPTLDGKVSLKIPAETQTGRMFRLRGKGVKSVRSHAVGDLLCKVVMETPVNLNDRQKELLREFEATLTGESKKHSPKAEGFFDGVKKFFQDLNS</sequence>